<keyword id="KW-0342">GTP-binding</keyword>
<keyword id="KW-0378">Hydrolase</keyword>
<keyword id="KW-0396">Initiation factor</keyword>
<keyword id="KW-0460">Magnesium</keyword>
<keyword id="KW-0479">Metal-binding</keyword>
<keyword id="KW-0547">Nucleotide-binding</keyword>
<keyword id="KW-0648">Protein biosynthesis</keyword>
<keyword id="KW-1185">Reference proteome</keyword>
<keyword id="KW-0862">Zinc</keyword>
<gene>
    <name evidence="1" type="primary">eif2g</name>
    <name type="ordered locus">MTH_261</name>
</gene>
<evidence type="ECO:0000255" key="1">
    <source>
        <dbReference type="HAMAP-Rule" id="MF_00119"/>
    </source>
</evidence>
<evidence type="ECO:0000305" key="2"/>
<reference key="1">
    <citation type="journal article" date="1997" name="J. Bacteriol.">
        <title>Complete genome sequence of Methanobacterium thermoautotrophicum deltaH: functional analysis and comparative genomics.</title>
        <authorList>
            <person name="Smith D.R."/>
            <person name="Doucette-Stamm L.A."/>
            <person name="Deloughery C."/>
            <person name="Lee H.-M."/>
            <person name="Dubois J."/>
            <person name="Aldredge T."/>
            <person name="Bashirzadeh R."/>
            <person name="Blakely D."/>
            <person name="Cook R."/>
            <person name="Gilbert K."/>
            <person name="Harrison D."/>
            <person name="Hoang L."/>
            <person name="Keagle P."/>
            <person name="Lumm W."/>
            <person name="Pothier B."/>
            <person name="Qiu D."/>
            <person name="Spadafora R."/>
            <person name="Vicare R."/>
            <person name="Wang Y."/>
            <person name="Wierzbowski J."/>
            <person name="Gibson R."/>
            <person name="Jiwani N."/>
            <person name="Caruso A."/>
            <person name="Bush D."/>
            <person name="Safer H."/>
            <person name="Patwell D."/>
            <person name="Prabhakar S."/>
            <person name="McDougall S."/>
            <person name="Shimer G."/>
            <person name="Goyal A."/>
            <person name="Pietrovski S."/>
            <person name="Church G.M."/>
            <person name="Daniels C.J."/>
            <person name="Mao J.-I."/>
            <person name="Rice P."/>
            <person name="Noelling J."/>
            <person name="Reeve J.N."/>
        </authorList>
    </citation>
    <scope>NUCLEOTIDE SEQUENCE [LARGE SCALE GENOMIC DNA]</scope>
    <source>
        <strain>ATCC 29096 / DSM 1053 / JCM 10044 / NBRC 100330 / Delta H</strain>
    </source>
</reference>
<dbReference type="EC" id="3.6.5.3" evidence="1"/>
<dbReference type="EMBL" id="AE000666">
    <property type="protein sequence ID" value="AAB84767.1"/>
    <property type="molecule type" value="Genomic_DNA"/>
</dbReference>
<dbReference type="PIR" id="H69132">
    <property type="entry name" value="H69132"/>
</dbReference>
<dbReference type="RefSeq" id="WP_010875900.1">
    <property type="nucleotide sequence ID" value="NC_000916.1"/>
</dbReference>
<dbReference type="SMR" id="O26361"/>
<dbReference type="FunCoup" id="O26361">
    <property type="interactions" value="177"/>
</dbReference>
<dbReference type="STRING" id="187420.MTH_261"/>
<dbReference type="PaxDb" id="187420-MTH_261"/>
<dbReference type="EnsemblBacteria" id="AAB84767">
    <property type="protein sequence ID" value="AAB84767"/>
    <property type="gene ID" value="MTH_261"/>
</dbReference>
<dbReference type="GeneID" id="82296735"/>
<dbReference type="KEGG" id="mth:MTH_261"/>
<dbReference type="PATRIC" id="fig|187420.15.peg.230"/>
<dbReference type="HOGENOM" id="CLU_027154_0_1_2"/>
<dbReference type="InParanoid" id="O26361"/>
<dbReference type="Proteomes" id="UP000005223">
    <property type="component" value="Chromosome"/>
</dbReference>
<dbReference type="GO" id="GO:0005829">
    <property type="term" value="C:cytosol"/>
    <property type="evidence" value="ECO:0007669"/>
    <property type="project" value="TreeGrafter"/>
</dbReference>
<dbReference type="GO" id="GO:0005525">
    <property type="term" value="F:GTP binding"/>
    <property type="evidence" value="ECO:0007669"/>
    <property type="project" value="UniProtKB-UniRule"/>
</dbReference>
<dbReference type="GO" id="GO:0003924">
    <property type="term" value="F:GTPase activity"/>
    <property type="evidence" value="ECO:0007669"/>
    <property type="project" value="InterPro"/>
</dbReference>
<dbReference type="GO" id="GO:0046872">
    <property type="term" value="F:metal ion binding"/>
    <property type="evidence" value="ECO:0007669"/>
    <property type="project" value="UniProtKB-KW"/>
</dbReference>
<dbReference type="GO" id="GO:0003746">
    <property type="term" value="F:translation elongation factor activity"/>
    <property type="evidence" value="ECO:0007669"/>
    <property type="project" value="UniProtKB-UniRule"/>
</dbReference>
<dbReference type="GO" id="GO:0003743">
    <property type="term" value="F:translation initiation factor activity"/>
    <property type="evidence" value="ECO:0007669"/>
    <property type="project" value="UniProtKB-KW"/>
</dbReference>
<dbReference type="GO" id="GO:0000049">
    <property type="term" value="F:tRNA binding"/>
    <property type="evidence" value="ECO:0007669"/>
    <property type="project" value="InterPro"/>
</dbReference>
<dbReference type="GO" id="GO:0001731">
    <property type="term" value="P:formation of translation preinitiation complex"/>
    <property type="evidence" value="ECO:0007669"/>
    <property type="project" value="TreeGrafter"/>
</dbReference>
<dbReference type="CDD" id="cd01888">
    <property type="entry name" value="eIF2_gamma"/>
    <property type="match status" value="1"/>
</dbReference>
<dbReference type="CDD" id="cd03688">
    <property type="entry name" value="eIF2_gamma_II"/>
    <property type="match status" value="1"/>
</dbReference>
<dbReference type="CDD" id="cd15490">
    <property type="entry name" value="eIF2_gamma_III"/>
    <property type="match status" value="1"/>
</dbReference>
<dbReference type="FunFam" id="2.40.30.10:FF:000009">
    <property type="entry name" value="Eukaryotic translation initiation factor 2 subunit gamma"/>
    <property type="match status" value="1"/>
</dbReference>
<dbReference type="FunFam" id="3.40.50.300:FF:000065">
    <property type="entry name" value="Eukaryotic translation initiation factor 2 subunit gamma"/>
    <property type="match status" value="1"/>
</dbReference>
<dbReference type="FunFam" id="2.40.30.10:FF:000075">
    <property type="entry name" value="Translation initiation factor 2 subunit gamma"/>
    <property type="match status" value="1"/>
</dbReference>
<dbReference type="Gene3D" id="3.40.50.300">
    <property type="entry name" value="P-loop containing nucleotide triphosphate hydrolases"/>
    <property type="match status" value="1"/>
</dbReference>
<dbReference type="Gene3D" id="2.40.30.10">
    <property type="entry name" value="Translation factors"/>
    <property type="match status" value="2"/>
</dbReference>
<dbReference type="HAMAP" id="MF_00119">
    <property type="entry name" value="eIF_2_gamma"/>
    <property type="match status" value="1"/>
</dbReference>
<dbReference type="InterPro" id="IPR004161">
    <property type="entry name" value="EFTu-like_2"/>
</dbReference>
<dbReference type="InterPro" id="IPR050543">
    <property type="entry name" value="eIF2G"/>
</dbReference>
<dbReference type="InterPro" id="IPR015256">
    <property type="entry name" value="eIF2g_C"/>
</dbReference>
<dbReference type="InterPro" id="IPR044127">
    <property type="entry name" value="eIF2g_dom_2"/>
</dbReference>
<dbReference type="InterPro" id="IPR044128">
    <property type="entry name" value="eIF2g_GTP-bd"/>
</dbReference>
<dbReference type="InterPro" id="IPR027417">
    <property type="entry name" value="P-loop_NTPase"/>
</dbReference>
<dbReference type="InterPro" id="IPR005225">
    <property type="entry name" value="Small_GTP-bd"/>
</dbReference>
<dbReference type="InterPro" id="IPR000795">
    <property type="entry name" value="T_Tr_GTP-bd_dom"/>
</dbReference>
<dbReference type="InterPro" id="IPR022424">
    <property type="entry name" value="TIF2_gsu"/>
</dbReference>
<dbReference type="InterPro" id="IPR009000">
    <property type="entry name" value="Transl_B-barrel_sf"/>
</dbReference>
<dbReference type="InterPro" id="IPR009001">
    <property type="entry name" value="Transl_elong_EF1A/Init_IF2_C"/>
</dbReference>
<dbReference type="NCBIfam" id="TIGR03680">
    <property type="entry name" value="eif2g_arch"/>
    <property type="match status" value="1"/>
</dbReference>
<dbReference type="NCBIfam" id="NF003077">
    <property type="entry name" value="PRK04000.1"/>
    <property type="match status" value="1"/>
</dbReference>
<dbReference type="NCBIfam" id="TIGR00231">
    <property type="entry name" value="small_GTP"/>
    <property type="match status" value="1"/>
</dbReference>
<dbReference type="PANTHER" id="PTHR42854">
    <property type="entry name" value="EUKARYOTIC TRANSLATION INITIATION FACTOR 2 SUBUNIT 3 FAMILY MEMBER"/>
    <property type="match status" value="1"/>
</dbReference>
<dbReference type="PANTHER" id="PTHR42854:SF3">
    <property type="entry name" value="EUKARYOTIC TRANSLATION INITIATION FACTOR 2 SUBUNIT 3-RELATED"/>
    <property type="match status" value="1"/>
</dbReference>
<dbReference type="Pfam" id="PF09173">
    <property type="entry name" value="eIF2_C"/>
    <property type="match status" value="1"/>
</dbReference>
<dbReference type="Pfam" id="PF00009">
    <property type="entry name" value="GTP_EFTU"/>
    <property type="match status" value="1"/>
</dbReference>
<dbReference type="Pfam" id="PF03144">
    <property type="entry name" value="GTP_EFTU_D2"/>
    <property type="match status" value="1"/>
</dbReference>
<dbReference type="PRINTS" id="PR00315">
    <property type="entry name" value="ELONGATNFCT"/>
</dbReference>
<dbReference type="SUPFAM" id="SSF50465">
    <property type="entry name" value="EF-Tu/eEF-1alpha/eIF2-gamma C-terminal domain"/>
    <property type="match status" value="1"/>
</dbReference>
<dbReference type="SUPFAM" id="SSF52540">
    <property type="entry name" value="P-loop containing nucleoside triphosphate hydrolases"/>
    <property type="match status" value="1"/>
</dbReference>
<dbReference type="SUPFAM" id="SSF50447">
    <property type="entry name" value="Translation proteins"/>
    <property type="match status" value="1"/>
</dbReference>
<dbReference type="PROSITE" id="PS51722">
    <property type="entry name" value="G_TR_2"/>
    <property type="match status" value="1"/>
</dbReference>
<accession>O26361</accession>
<name>IF2G_METTH</name>
<protein>
    <recommendedName>
        <fullName evidence="1">Translation initiation factor 2 subunit gamma</fullName>
        <ecNumber evidence="1">3.6.5.3</ecNumber>
    </recommendedName>
    <alternativeName>
        <fullName evidence="1">aIF2-gamma</fullName>
    </alternativeName>
    <alternativeName>
        <fullName evidence="1">eIF-2-gamma</fullName>
    </alternativeName>
</protein>
<proteinExistence type="inferred from homology"/>
<comment type="function">
    <text evidence="1">eIF-2 functions in the early steps of protein synthesis by forming a ternary complex with GTP and initiator tRNA.</text>
</comment>
<comment type="catalytic activity">
    <reaction evidence="1">
        <text>GTP + H2O = GDP + phosphate + H(+)</text>
        <dbReference type="Rhea" id="RHEA:19669"/>
        <dbReference type="ChEBI" id="CHEBI:15377"/>
        <dbReference type="ChEBI" id="CHEBI:15378"/>
        <dbReference type="ChEBI" id="CHEBI:37565"/>
        <dbReference type="ChEBI" id="CHEBI:43474"/>
        <dbReference type="ChEBI" id="CHEBI:58189"/>
        <dbReference type="EC" id="3.6.5.3"/>
    </reaction>
</comment>
<comment type="cofactor">
    <cofactor evidence="1">
        <name>Mg(2+)</name>
        <dbReference type="ChEBI" id="CHEBI:18420"/>
    </cofactor>
</comment>
<comment type="subunit">
    <text evidence="1">Heterotrimer composed of an alpha, a beta and a gamma chain.</text>
</comment>
<comment type="similarity">
    <text evidence="1 2">Belongs to the TRAFAC class translation factor GTPase superfamily. Classic translation factor GTPase family. EIF2G subfamily.</text>
</comment>
<organism>
    <name type="scientific">Methanothermobacter thermautotrophicus (strain ATCC 29096 / DSM 1053 / JCM 10044 / NBRC 100330 / Delta H)</name>
    <name type="common">Methanobacterium thermoautotrophicum</name>
    <dbReference type="NCBI Taxonomy" id="187420"/>
    <lineage>
        <taxon>Archaea</taxon>
        <taxon>Methanobacteriati</taxon>
        <taxon>Methanobacteriota</taxon>
        <taxon>Methanomada group</taxon>
        <taxon>Methanobacteria</taxon>
        <taxon>Methanobacteriales</taxon>
        <taxon>Methanobacteriaceae</taxon>
        <taxon>Methanothermobacter</taxon>
    </lineage>
</organism>
<sequence length="408" mass="43898">MKNQSEINIGLVGHVDHGKTTLTKALSGVWTDTHSEETKRGISIRLGYADITFRKCPQCEAPMCYTTAEICERCGTETELLRKVSFVDAPGHETLMATMLSGAALMDGAILVIAANEPCPQPQTKEHLMALDVIGVKDVIVVQNKIDIVSKERALESYREIKEFVKGTCAEDAPIIPVSAQQGANIDILIETIEERIKTPKRDVDKPARMYVARSFDINKPGADPEHLAGGVIGGSLVQGRLRVGDEIEIRPGIQVKKDGKQTWMSLHSTITGLVAGGEEMEEVGPGGLVGVGTLLDPALTKADSLSGSVAGEPGTLPPVRHSFTMETHLLERVVGTKEETKVEPIKTGEPLMINVGTTTTVGVVKSARADDADVVLKLPACAEEGQRIALSRRVGARWRLIGYGIIK</sequence>
<feature type="chain" id="PRO_0000137458" description="Translation initiation factor 2 subunit gamma">
    <location>
        <begin position="1"/>
        <end position="408"/>
    </location>
</feature>
<feature type="domain" description="tr-type G" evidence="1">
    <location>
        <begin position="4"/>
        <end position="201"/>
    </location>
</feature>
<feature type="region of interest" description="G1" evidence="1">
    <location>
        <begin position="13"/>
        <end position="20"/>
    </location>
</feature>
<feature type="region of interest" description="G2" evidence="1">
    <location>
        <begin position="41"/>
        <end position="45"/>
    </location>
</feature>
<feature type="region of interest" description="G3" evidence="1">
    <location>
        <begin position="88"/>
        <end position="91"/>
    </location>
</feature>
<feature type="region of interest" description="G4" evidence="1">
    <location>
        <begin position="144"/>
        <end position="147"/>
    </location>
</feature>
<feature type="region of interest" description="G5" evidence="1">
    <location>
        <begin position="179"/>
        <end position="181"/>
    </location>
</feature>
<feature type="binding site" evidence="1">
    <location>
        <begin position="16"/>
        <end position="21"/>
    </location>
    <ligand>
        <name>GTP</name>
        <dbReference type="ChEBI" id="CHEBI:37565"/>
    </ligand>
</feature>
<feature type="binding site" evidence="1">
    <location>
        <position position="16"/>
    </location>
    <ligand>
        <name>Mg(2+)</name>
        <dbReference type="ChEBI" id="CHEBI:18420"/>
        <label>2</label>
    </ligand>
</feature>
<feature type="binding site" evidence="1">
    <location>
        <position position="20"/>
    </location>
    <ligand>
        <name>Mg(2+)</name>
        <dbReference type="ChEBI" id="CHEBI:18420"/>
        <label>1</label>
    </ligand>
</feature>
<feature type="binding site" evidence="1">
    <location>
        <position position="41"/>
    </location>
    <ligand>
        <name>Mg(2+)</name>
        <dbReference type="ChEBI" id="CHEBI:18420"/>
        <label>2</label>
    </ligand>
</feature>
<feature type="binding site" evidence="1">
    <location>
        <position position="43"/>
    </location>
    <ligand>
        <name>Mg(2+)</name>
        <dbReference type="ChEBI" id="CHEBI:18420"/>
        <label>1</label>
    </ligand>
</feature>
<feature type="binding site" evidence="1">
    <location>
        <position position="56"/>
    </location>
    <ligand>
        <name>Zn(2+)</name>
        <dbReference type="ChEBI" id="CHEBI:29105"/>
    </ligand>
</feature>
<feature type="binding site" evidence="1">
    <location>
        <position position="59"/>
    </location>
    <ligand>
        <name>Zn(2+)</name>
        <dbReference type="ChEBI" id="CHEBI:29105"/>
    </ligand>
</feature>
<feature type="binding site" evidence="1">
    <location>
        <position position="71"/>
    </location>
    <ligand>
        <name>Zn(2+)</name>
        <dbReference type="ChEBI" id="CHEBI:29105"/>
    </ligand>
</feature>
<feature type="binding site" evidence="1">
    <location>
        <position position="74"/>
    </location>
    <ligand>
        <name>Zn(2+)</name>
        <dbReference type="ChEBI" id="CHEBI:29105"/>
    </ligand>
</feature>
<feature type="binding site" evidence="1">
    <location>
        <begin position="144"/>
        <end position="147"/>
    </location>
    <ligand>
        <name>GTP</name>
        <dbReference type="ChEBI" id="CHEBI:37565"/>
    </ligand>
</feature>
<feature type="binding site" evidence="1">
    <location>
        <begin position="179"/>
        <end position="181"/>
    </location>
    <ligand>
        <name>GTP</name>
        <dbReference type="ChEBI" id="CHEBI:37565"/>
    </ligand>
</feature>